<keyword id="KW-0963">Cytoplasm</keyword>
<keyword id="KW-0903">Direct protein sequencing</keyword>
<keyword id="KW-0274">FAD</keyword>
<keyword id="KW-0285">Flavoprotein</keyword>
<keyword id="KW-0521">NADP</keyword>
<keyword id="KW-0560">Oxidoreductase</keyword>
<keyword id="KW-0676">Redox-active center</keyword>
<comment type="catalytic activity">
    <reaction>
        <text>[thioredoxin]-dithiol + NADP(+) = [thioredoxin]-disulfide + NADPH + H(+)</text>
        <dbReference type="Rhea" id="RHEA:20345"/>
        <dbReference type="Rhea" id="RHEA-COMP:10698"/>
        <dbReference type="Rhea" id="RHEA-COMP:10700"/>
        <dbReference type="ChEBI" id="CHEBI:15378"/>
        <dbReference type="ChEBI" id="CHEBI:29950"/>
        <dbReference type="ChEBI" id="CHEBI:50058"/>
        <dbReference type="ChEBI" id="CHEBI:57783"/>
        <dbReference type="ChEBI" id="CHEBI:58349"/>
        <dbReference type="EC" id="1.8.1.9"/>
    </reaction>
</comment>
<comment type="cofactor">
    <cofactor evidence="1">
        <name>FAD</name>
        <dbReference type="ChEBI" id="CHEBI:57692"/>
    </cofactor>
    <text evidence="1">Binds 1 FAD per subunit.</text>
</comment>
<comment type="subunit">
    <text evidence="1">Homodimer.</text>
</comment>
<comment type="subcellular location">
    <subcellularLocation>
        <location>Cytoplasm</location>
    </subcellularLocation>
</comment>
<comment type="miscellaneous">
    <text>The active site is a redox-active disulfide bond.</text>
</comment>
<comment type="similarity">
    <text evidence="2">Belongs to the class-II pyridine nucleotide-disulfide oxidoreductase family.</text>
</comment>
<protein>
    <recommendedName>
        <fullName>Thioredoxin reductase</fullName>
        <shortName>TRXR</shortName>
        <ecNumber>1.8.1.9</ecNumber>
    </recommendedName>
</protein>
<proteinExistence type="evidence at protein level"/>
<sequence>MNVKHSKLLILGSGPAGYTAAVYAARANLNPVMITGMQQGGQLTN</sequence>
<evidence type="ECO:0000250" key="1">
    <source>
        <dbReference type="UniProtKB" id="P0A9P4"/>
    </source>
</evidence>
<evidence type="ECO:0000305" key="2"/>
<organism>
    <name type="scientific">Aliivibrio fischeri</name>
    <name type="common">Vibrio fischeri</name>
    <dbReference type="NCBI Taxonomy" id="668"/>
    <lineage>
        <taxon>Bacteria</taxon>
        <taxon>Pseudomonadati</taxon>
        <taxon>Pseudomonadota</taxon>
        <taxon>Gammaproteobacteria</taxon>
        <taxon>Vibrionales</taxon>
        <taxon>Vibrionaceae</taxon>
        <taxon>Aliivibrio</taxon>
    </lineage>
</organism>
<accession>P80892</accession>
<feature type="chain" id="PRO_0000166757" description="Thioredoxin reductase">
    <location>
        <begin position="1"/>
        <end position="45" status="greater than"/>
    </location>
</feature>
<feature type="binding site">
    <location>
        <begin position="35"/>
        <end position="42"/>
    </location>
    <ligand>
        <name>FAD</name>
        <dbReference type="ChEBI" id="CHEBI:57692"/>
    </ligand>
</feature>
<feature type="non-terminal residue">
    <location>
        <position position="45"/>
    </location>
</feature>
<dbReference type="EC" id="1.8.1.9"/>
<dbReference type="SMR" id="P80892"/>
<dbReference type="GO" id="GO:0005737">
    <property type="term" value="C:cytoplasm"/>
    <property type="evidence" value="ECO:0007669"/>
    <property type="project" value="UniProtKB-SubCell"/>
</dbReference>
<dbReference type="GO" id="GO:0004791">
    <property type="term" value="F:thioredoxin-disulfide reductase (NADPH) activity"/>
    <property type="evidence" value="ECO:0007669"/>
    <property type="project" value="UniProtKB-EC"/>
</dbReference>
<dbReference type="Gene3D" id="3.50.50.60">
    <property type="entry name" value="FAD/NAD(P)-binding domain"/>
    <property type="match status" value="1"/>
</dbReference>
<dbReference type="InterPro" id="IPR003953">
    <property type="entry name" value="FAD-dep_OxRdtase_2_FAD-bd"/>
</dbReference>
<dbReference type="InterPro" id="IPR036188">
    <property type="entry name" value="FAD/NAD-bd_sf"/>
</dbReference>
<dbReference type="Pfam" id="PF00890">
    <property type="entry name" value="FAD_binding_2"/>
    <property type="match status" value="1"/>
</dbReference>
<dbReference type="PRINTS" id="PR00469">
    <property type="entry name" value="PNDRDTASEII"/>
</dbReference>
<dbReference type="SUPFAM" id="SSF51905">
    <property type="entry name" value="FAD/NAD(P)-binding domain"/>
    <property type="match status" value="1"/>
</dbReference>
<reference key="1">
    <citation type="journal article" date="1997" name="Eur. J. Biochem.">
        <title>Purification and characterization of flavoproteins and cytochromes from the yellow bioluminescence marine bacterium Vibrio fischeri strain Y1.</title>
        <authorList>
            <person name="Petushkov V.N."/>
            <person name="Lee J."/>
        </authorList>
    </citation>
    <scope>PROTEIN SEQUENCE</scope>
    <source>
        <strain>ATCC 33715 / Y-1</strain>
    </source>
</reference>
<gene>
    <name type="primary">trxB</name>
</gene>
<name>TRXB_ALIFS</name>